<evidence type="ECO:0000255" key="1">
    <source>
        <dbReference type="HAMAP-Rule" id="MF_00180"/>
    </source>
</evidence>
<organism>
    <name type="scientific">Yersinia pseudotuberculosis serotype IB (strain PB1/+)</name>
    <dbReference type="NCBI Taxonomy" id="502801"/>
    <lineage>
        <taxon>Bacteria</taxon>
        <taxon>Pseudomonadati</taxon>
        <taxon>Pseudomonadota</taxon>
        <taxon>Gammaproteobacteria</taxon>
        <taxon>Enterobacterales</taxon>
        <taxon>Yersiniaceae</taxon>
        <taxon>Yersinia</taxon>
    </lineage>
</organism>
<dbReference type="EC" id="4.1.99.12" evidence="1"/>
<dbReference type="EMBL" id="CP001048">
    <property type="protein sequence ID" value="ACC90499.1"/>
    <property type="molecule type" value="Genomic_DNA"/>
</dbReference>
<dbReference type="RefSeq" id="WP_002212190.1">
    <property type="nucleotide sequence ID" value="NZ_CP009780.1"/>
</dbReference>
<dbReference type="SMR" id="B2K2H0"/>
<dbReference type="GeneID" id="57973967"/>
<dbReference type="KEGG" id="ypb:YPTS_3546"/>
<dbReference type="PATRIC" id="fig|502801.10.peg.2995"/>
<dbReference type="UniPathway" id="UPA00275">
    <property type="reaction ID" value="UER00399"/>
</dbReference>
<dbReference type="GO" id="GO:0005829">
    <property type="term" value="C:cytosol"/>
    <property type="evidence" value="ECO:0007669"/>
    <property type="project" value="TreeGrafter"/>
</dbReference>
<dbReference type="GO" id="GO:0008686">
    <property type="term" value="F:3,4-dihydroxy-2-butanone-4-phosphate synthase activity"/>
    <property type="evidence" value="ECO:0007669"/>
    <property type="project" value="UniProtKB-UniRule"/>
</dbReference>
<dbReference type="GO" id="GO:0000287">
    <property type="term" value="F:magnesium ion binding"/>
    <property type="evidence" value="ECO:0007669"/>
    <property type="project" value="UniProtKB-UniRule"/>
</dbReference>
<dbReference type="GO" id="GO:0030145">
    <property type="term" value="F:manganese ion binding"/>
    <property type="evidence" value="ECO:0007669"/>
    <property type="project" value="UniProtKB-UniRule"/>
</dbReference>
<dbReference type="GO" id="GO:0009231">
    <property type="term" value="P:riboflavin biosynthetic process"/>
    <property type="evidence" value="ECO:0007669"/>
    <property type="project" value="UniProtKB-UniRule"/>
</dbReference>
<dbReference type="FunFam" id="3.90.870.10:FF:000002">
    <property type="entry name" value="3,4-dihydroxy-2-butanone 4-phosphate synthase"/>
    <property type="match status" value="1"/>
</dbReference>
<dbReference type="Gene3D" id="3.90.870.10">
    <property type="entry name" value="DHBP synthase"/>
    <property type="match status" value="1"/>
</dbReference>
<dbReference type="HAMAP" id="MF_00180">
    <property type="entry name" value="RibB"/>
    <property type="match status" value="1"/>
</dbReference>
<dbReference type="InterPro" id="IPR017945">
    <property type="entry name" value="DHBP_synth_RibB-like_a/b_dom"/>
</dbReference>
<dbReference type="InterPro" id="IPR000422">
    <property type="entry name" value="DHBP_synthase_RibB"/>
</dbReference>
<dbReference type="NCBIfam" id="TIGR00506">
    <property type="entry name" value="ribB"/>
    <property type="match status" value="1"/>
</dbReference>
<dbReference type="PANTHER" id="PTHR21327:SF38">
    <property type="entry name" value="3,4-DIHYDROXY-2-BUTANONE 4-PHOSPHATE SYNTHASE"/>
    <property type="match status" value="1"/>
</dbReference>
<dbReference type="PANTHER" id="PTHR21327">
    <property type="entry name" value="GTP CYCLOHYDROLASE II-RELATED"/>
    <property type="match status" value="1"/>
</dbReference>
<dbReference type="Pfam" id="PF00926">
    <property type="entry name" value="DHBP_synthase"/>
    <property type="match status" value="1"/>
</dbReference>
<dbReference type="SUPFAM" id="SSF55821">
    <property type="entry name" value="YrdC/RibB"/>
    <property type="match status" value="1"/>
</dbReference>
<keyword id="KW-0456">Lyase</keyword>
<keyword id="KW-0460">Magnesium</keyword>
<keyword id="KW-0464">Manganese</keyword>
<keyword id="KW-0479">Metal-binding</keyword>
<keyword id="KW-0686">Riboflavin biosynthesis</keyword>
<sequence length="217" mass="23360">MNQTLLSDFGTPVERVERAIDALRNGRGVMVLDDESRENEGDMVFAAEAMTLEQMALTIRHGSGIVCLCITDERRQQLDLPMMVTHNSSQFQTAFTVTIEAAEGVTTGVSAADRLTTIRKAIADNAKPADLNRPGHVFPLRGQPGGVLSRRGHTEASIDLATLAGYKPAGVLCELTNDDGSMAHAPEVIAFAKLHDMPVVTIDDLAAYLQSRAKKAS</sequence>
<feature type="chain" id="PRO_1000098293" description="3,4-dihydroxy-2-butanone 4-phosphate synthase">
    <location>
        <begin position="1"/>
        <end position="217"/>
    </location>
</feature>
<feature type="binding site" evidence="1">
    <location>
        <begin position="37"/>
        <end position="38"/>
    </location>
    <ligand>
        <name>D-ribulose 5-phosphate</name>
        <dbReference type="ChEBI" id="CHEBI:58121"/>
    </ligand>
</feature>
<feature type="binding site" evidence="1">
    <location>
        <position position="38"/>
    </location>
    <ligand>
        <name>Mg(2+)</name>
        <dbReference type="ChEBI" id="CHEBI:18420"/>
        <label>1</label>
    </ligand>
</feature>
<feature type="binding site" evidence="1">
    <location>
        <position position="38"/>
    </location>
    <ligand>
        <name>Mg(2+)</name>
        <dbReference type="ChEBI" id="CHEBI:18420"/>
        <label>2</label>
    </ligand>
</feature>
<feature type="binding site" evidence="1">
    <location>
        <position position="42"/>
    </location>
    <ligand>
        <name>D-ribulose 5-phosphate</name>
        <dbReference type="ChEBI" id="CHEBI:58121"/>
    </ligand>
</feature>
<feature type="binding site" evidence="1">
    <location>
        <begin position="150"/>
        <end position="154"/>
    </location>
    <ligand>
        <name>D-ribulose 5-phosphate</name>
        <dbReference type="ChEBI" id="CHEBI:58121"/>
    </ligand>
</feature>
<feature type="binding site" evidence="1">
    <location>
        <position position="153"/>
    </location>
    <ligand>
        <name>Mg(2+)</name>
        <dbReference type="ChEBI" id="CHEBI:18420"/>
        <label>2</label>
    </ligand>
</feature>
<feature type="binding site" evidence="1">
    <location>
        <position position="174"/>
    </location>
    <ligand>
        <name>D-ribulose 5-phosphate</name>
        <dbReference type="ChEBI" id="CHEBI:58121"/>
    </ligand>
</feature>
<feature type="site" description="Essential for catalytic activity" evidence="1">
    <location>
        <position position="136"/>
    </location>
</feature>
<feature type="site" description="Essential for catalytic activity" evidence="1">
    <location>
        <position position="174"/>
    </location>
</feature>
<reference key="1">
    <citation type="submission" date="2008-04" db="EMBL/GenBank/DDBJ databases">
        <title>Complete sequence of Yersinia pseudotuberculosis PB1/+.</title>
        <authorList>
            <person name="Copeland A."/>
            <person name="Lucas S."/>
            <person name="Lapidus A."/>
            <person name="Glavina del Rio T."/>
            <person name="Dalin E."/>
            <person name="Tice H."/>
            <person name="Bruce D."/>
            <person name="Goodwin L."/>
            <person name="Pitluck S."/>
            <person name="Munk A.C."/>
            <person name="Brettin T."/>
            <person name="Detter J.C."/>
            <person name="Han C."/>
            <person name="Tapia R."/>
            <person name="Schmutz J."/>
            <person name="Larimer F."/>
            <person name="Land M."/>
            <person name="Hauser L."/>
            <person name="Challacombe J.F."/>
            <person name="Green L."/>
            <person name="Lindler L.E."/>
            <person name="Nikolich M.P."/>
            <person name="Richardson P."/>
        </authorList>
    </citation>
    <scope>NUCLEOTIDE SEQUENCE [LARGE SCALE GENOMIC DNA]</scope>
    <source>
        <strain>PB1/+</strain>
    </source>
</reference>
<name>RIBB_YERPB</name>
<gene>
    <name evidence="1" type="primary">ribB</name>
    <name type="ordered locus">YPTS_3546</name>
</gene>
<accession>B2K2H0</accession>
<proteinExistence type="inferred from homology"/>
<protein>
    <recommendedName>
        <fullName evidence="1">3,4-dihydroxy-2-butanone 4-phosphate synthase</fullName>
        <shortName evidence="1">DHBP synthase</shortName>
        <ecNumber evidence="1">4.1.99.12</ecNumber>
    </recommendedName>
</protein>
<comment type="function">
    <text evidence="1">Catalyzes the conversion of D-ribulose 5-phosphate to formate and 3,4-dihydroxy-2-butanone 4-phosphate.</text>
</comment>
<comment type="catalytic activity">
    <reaction evidence="1">
        <text>D-ribulose 5-phosphate = (2S)-2-hydroxy-3-oxobutyl phosphate + formate + H(+)</text>
        <dbReference type="Rhea" id="RHEA:18457"/>
        <dbReference type="ChEBI" id="CHEBI:15378"/>
        <dbReference type="ChEBI" id="CHEBI:15740"/>
        <dbReference type="ChEBI" id="CHEBI:58121"/>
        <dbReference type="ChEBI" id="CHEBI:58830"/>
        <dbReference type="EC" id="4.1.99.12"/>
    </reaction>
</comment>
<comment type="cofactor">
    <cofactor evidence="1">
        <name>Mg(2+)</name>
        <dbReference type="ChEBI" id="CHEBI:18420"/>
    </cofactor>
    <cofactor evidence="1">
        <name>Mn(2+)</name>
        <dbReference type="ChEBI" id="CHEBI:29035"/>
    </cofactor>
    <text evidence="1">Binds 2 divalent metal cations per subunit. Magnesium or manganese.</text>
</comment>
<comment type="pathway">
    <text evidence="1">Cofactor biosynthesis; riboflavin biosynthesis; 2-hydroxy-3-oxobutyl phosphate from D-ribulose 5-phosphate: step 1/1.</text>
</comment>
<comment type="subunit">
    <text evidence="1">Homodimer.</text>
</comment>
<comment type="similarity">
    <text evidence="1">Belongs to the DHBP synthase family.</text>
</comment>